<dbReference type="EMBL" id="AE003853">
    <property type="protein sequence ID" value="AAF95954.1"/>
    <property type="molecule type" value="Genomic_DNA"/>
</dbReference>
<dbReference type="PIR" id="F82509">
    <property type="entry name" value="F82509"/>
</dbReference>
<dbReference type="RefSeq" id="NP_232441.1">
    <property type="nucleotide sequence ID" value="NC_002506.1"/>
</dbReference>
<dbReference type="STRING" id="243277.VC_A0040"/>
<dbReference type="DNASU" id="2612430"/>
<dbReference type="EnsemblBacteria" id="AAF95954">
    <property type="protein sequence ID" value="AAF95954"/>
    <property type="gene ID" value="VC_A0040"/>
</dbReference>
<dbReference type="KEGG" id="vch:VC_A0040"/>
<dbReference type="PATRIC" id="fig|243277.26.peg.2686"/>
<dbReference type="eggNOG" id="COG2035">
    <property type="taxonomic scope" value="Bacteria"/>
</dbReference>
<dbReference type="HOGENOM" id="CLU_055621_0_0_6"/>
<dbReference type="Proteomes" id="UP000000584">
    <property type="component" value="Chromosome 2"/>
</dbReference>
<dbReference type="GO" id="GO:0005886">
    <property type="term" value="C:plasma membrane"/>
    <property type="evidence" value="ECO:0007669"/>
    <property type="project" value="UniProtKB-SubCell"/>
</dbReference>
<dbReference type="GO" id="GO:0071555">
    <property type="term" value="P:cell wall organization"/>
    <property type="evidence" value="ECO:0007669"/>
    <property type="project" value="UniProtKB-KW"/>
</dbReference>
<dbReference type="InterPro" id="IPR007163">
    <property type="entry name" value="VCA0040-like"/>
</dbReference>
<dbReference type="PANTHER" id="PTHR37308">
    <property type="entry name" value="INTEGRAL MEMBRANE PROTEIN"/>
    <property type="match status" value="1"/>
</dbReference>
<dbReference type="PANTHER" id="PTHR37308:SF1">
    <property type="entry name" value="POLYPRENYL-PHOSPHATE TRANSPORTER"/>
    <property type="match status" value="1"/>
</dbReference>
<dbReference type="Pfam" id="PF04018">
    <property type="entry name" value="VCA0040-like"/>
    <property type="match status" value="1"/>
</dbReference>
<keyword id="KW-0997">Cell inner membrane</keyword>
<keyword id="KW-1003">Cell membrane</keyword>
<keyword id="KW-0961">Cell wall biogenesis/degradation</keyword>
<keyword id="KW-0472">Membrane</keyword>
<keyword id="KW-1185">Reference proteome</keyword>
<keyword id="KW-0812">Transmembrane</keyword>
<keyword id="KW-1133">Transmembrane helix</keyword>
<keyword id="KW-0813">Transport</keyword>
<sequence>MAGKTMNYLSTYLKGLAMGAADVVPGVSGGTIAFITGIYDTLLESIRRINPSLLKVWKAQGLAGVFRHINGLFLITLFGGIFTSIATLAKLISWLLVTHPIPIWSFFFGLILVSVWHMLRQIEQKKLSRLLWLIAGAIFAYGITVLKPLHLEPTYINVLISGAIAICAMILPGISGSFILLLIGMYAPVLGAVKTFQLDILLIFLTGCVIGLLSFSHILSWLLRRYRDVTLTFLTGLMLGTLPKIWPWKETLSWRVNSSGEQVPLLQRNLSPFEFETLTSQPSQWLLALVLMLAAVALVLGLEKYAEK</sequence>
<reference key="1">
    <citation type="journal article" date="2000" name="Nature">
        <title>DNA sequence of both chromosomes of the cholera pathogen Vibrio cholerae.</title>
        <authorList>
            <person name="Heidelberg J.F."/>
            <person name="Eisen J.A."/>
            <person name="Nelson W.C."/>
            <person name="Clayton R.A."/>
            <person name="Gwinn M.L."/>
            <person name="Dodson R.J."/>
            <person name="Haft D.H."/>
            <person name="Hickey E.K."/>
            <person name="Peterson J.D."/>
            <person name="Umayam L.A."/>
            <person name="Gill S.R."/>
            <person name="Nelson K.E."/>
            <person name="Read T.D."/>
            <person name="Tettelin H."/>
            <person name="Richardson D.L."/>
            <person name="Ermolaeva M.D."/>
            <person name="Vamathevan J.J."/>
            <person name="Bass S."/>
            <person name="Qin H."/>
            <person name="Dragoi I."/>
            <person name="Sellers P."/>
            <person name="McDonald L.A."/>
            <person name="Utterback T.R."/>
            <person name="Fleischmann R.D."/>
            <person name="Nierman W.C."/>
            <person name="White O."/>
            <person name="Salzberg S.L."/>
            <person name="Smith H.O."/>
            <person name="Colwell R.R."/>
            <person name="Mekalanos J.J."/>
            <person name="Venter J.C."/>
            <person name="Fraser C.M."/>
        </authorList>
    </citation>
    <scope>NUCLEOTIDE SEQUENCE [LARGE SCALE GENOMIC DNA]</scope>
    <source>
        <strain>ATCC 39315 / El Tor Inaba N16961</strain>
    </source>
</reference>
<reference key="2">
    <citation type="journal article" date="2023" name="Nature">
        <title>Undecaprenyl phosphate translocases confer conditional microbial fitness.</title>
        <authorList>
            <person name="Sit B."/>
            <person name="Srisuknimit V."/>
            <person name="Bueno E."/>
            <person name="Zingl F.G."/>
            <person name="Hullahalli K."/>
            <person name="Cava F."/>
            <person name="Waldor M.K."/>
        </authorList>
    </citation>
    <scope>FUNCTION</scope>
    <scope>ACTIVITY REGULATION</scope>
    <scope>DISRUPTION PHENOTYPE</scope>
    <source>
        <strain>HaitiWT</strain>
    </source>
</reference>
<protein>
    <recommendedName>
        <fullName evidence="4">Polyprenyl-phosphate transporter</fullName>
    </recommendedName>
    <alternativeName>
        <fullName evidence="3">C55-P translocase</fullName>
    </alternativeName>
    <alternativeName>
        <fullName evidence="3">Undecaprenyl phosphate translocase</fullName>
    </alternativeName>
</protein>
<comment type="function">
    <text evidence="2">Flippase that catalyzes the transport of undecaprenyl phosphate (UndP) across the cytoplasmic membrane, from the external side to the cytoplasmic side (PubMed:36450355). Is involved in UndP recycling during peptidoglycan synthesis (PubMed:36450355). Required for cell shape maintenance at alkaline pH and peptidoglycan maintenance (PubMed:36450355). Required by the cholera pathogen for growth and cell shape maintenance in the intestine (PubMed:36450355).</text>
</comment>
<comment type="activity regulation">
    <text evidence="2">Active in alkaline conditions.</text>
</comment>
<comment type="subcellular location">
    <subcellularLocation>
        <location evidence="4">Cell inner membrane</location>
        <topology evidence="1">Multi-pass membrane protein</topology>
    </subcellularLocation>
</comment>
<comment type="disruption phenotype">
    <text evidence="2">Mutant lacking this gene exhibits growth and cell shape defects at pH above 8, but not at pH values of up to 7 (PubMed:36450355). The mutant has less peptidoglycan than the wild type, and modest cross-linking defects with concurrent accumulation of the peptidoglycan precursor UDP-N-acetylmuramyl pentapeptide (UDP-M5) (PubMed:36450355). UndP recycling is impaired and mutant shows increased cell surface UndP levels (PubMed:36450355). The mutant exhibits severe colonization defects in an infant rabbit model (PubMed:36450355).</text>
</comment>
<comment type="miscellaneous">
    <text evidence="2">Is sufficient for resistance to a surface UndP-targeting antibiotic.</text>
</comment>
<comment type="similarity">
    <text evidence="4">Belongs to the PopT family.</text>
</comment>
<gene>
    <name evidence="5" type="ordered locus">VC_A0040</name>
</gene>
<evidence type="ECO:0000255" key="1"/>
<evidence type="ECO:0000269" key="2">
    <source>
    </source>
</evidence>
<evidence type="ECO:0000303" key="3">
    <source>
    </source>
</evidence>
<evidence type="ECO:0000305" key="4"/>
<evidence type="ECO:0000312" key="5">
    <source>
        <dbReference type="EMBL" id="AAF95954.1"/>
    </source>
</evidence>
<proteinExistence type="inferred from homology"/>
<organism>
    <name type="scientific">Vibrio cholerae serotype O1 (strain ATCC 39315 / El Tor Inaba N16961)</name>
    <dbReference type="NCBI Taxonomy" id="243277"/>
    <lineage>
        <taxon>Bacteria</taxon>
        <taxon>Pseudomonadati</taxon>
        <taxon>Pseudomonadota</taxon>
        <taxon>Gammaproteobacteria</taxon>
        <taxon>Vibrionales</taxon>
        <taxon>Vibrionaceae</taxon>
        <taxon>Vibrio</taxon>
    </lineage>
</organism>
<name>POPT_VIBCH</name>
<accession>Q9KNC5</accession>
<feature type="chain" id="PRO_0000458063" description="Polyprenyl-phosphate transporter">
    <location>
        <begin position="1"/>
        <end position="308"/>
    </location>
</feature>
<feature type="transmembrane region" description="Helical" evidence="1">
    <location>
        <begin position="15"/>
        <end position="35"/>
    </location>
</feature>
<feature type="transmembrane region" description="Helical" evidence="1">
    <location>
        <begin position="69"/>
        <end position="89"/>
    </location>
</feature>
<feature type="transmembrane region" description="Helical" evidence="1">
    <location>
        <begin position="91"/>
        <end position="111"/>
    </location>
</feature>
<feature type="transmembrane region" description="Helical" evidence="1">
    <location>
        <begin position="130"/>
        <end position="150"/>
    </location>
</feature>
<feature type="transmembrane region" description="Helical" evidence="1">
    <location>
        <begin position="163"/>
        <end position="183"/>
    </location>
</feature>
<feature type="transmembrane region" description="Helical" evidence="1">
    <location>
        <begin position="200"/>
        <end position="220"/>
    </location>
</feature>
<feature type="transmembrane region" description="Helical" evidence="1">
    <location>
        <begin position="228"/>
        <end position="248"/>
    </location>
</feature>
<feature type="transmembrane region" description="Helical" evidence="1">
    <location>
        <begin position="282"/>
        <end position="302"/>
    </location>
</feature>